<accession>Q09443</accession>
<accession>Q17351</accession>
<keyword id="KW-0963">Cytoplasm</keyword>
<keyword id="KW-0206">Cytoskeleton</keyword>
<keyword id="KW-1185">Reference proteome</keyword>
<gene>
    <name type="primary">arp-6</name>
    <name type="ORF">C08B11.6</name>
</gene>
<evidence type="ECO:0000250" key="1"/>
<evidence type="ECO:0000269" key="2">
    <source>
    </source>
</evidence>
<evidence type="ECO:0000305" key="3"/>
<comment type="subcellular location">
    <subcellularLocation>
        <location evidence="1">Cytoplasm</location>
        <location evidence="1">Cytoskeleton</location>
    </subcellularLocation>
</comment>
<comment type="developmental stage">
    <text evidence="2">Expressed throughout development.</text>
</comment>
<comment type="similarity">
    <text evidence="3">Belongs to the actin family. ARP6 subfamily.</text>
</comment>
<feature type="chain" id="PRO_0000089109" description="Actin-like protein C08B11.6">
    <location>
        <begin position="1"/>
        <end position="418"/>
    </location>
</feature>
<feature type="sequence conflict" description="In Ref. 1; AAC47513." evidence="3" ref="1">
    <original>E</original>
    <variation>G</variation>
    <location>
        <position position="229"/>
    </location>
</feature>
<name>ARP6_CAEEL</name>
<dbReference type="EMBL" id="U24189">
    <property type="protein sequence ID" value="AAC47513.1"/>
    <property type="molecule type" value="mRNA"/>
</dbReference>
<dbReference type="EMBL" id="Z46676">
    <property type="protein sequence ID" value="CAA86667.3"/>
    <property type="molecule type" value="Genomic_DNA"/>
</dbReference>
<dbReference type="PIR" id="T19072">
    <property type="entry name" value="T19072"/>
</dbReference>
<dbReference type="RefSeq" id="NP_495681.4">
    <property type="nucleotide sequence ID" value="NM_063280.5"/>
</dbReference>
<dbReference type="SMR" id="Q09443"/>
<dbReference type="BioGRID" id="39620">
    <property type="interactions" value="2"/>
</dbReference>
<dbReference type="FunCoup" id="Q09443">
    <property type="interactions" value="1118"/>
</dbReference>
<dbReference type="STRING" id="6239.C08B11.6.1"/>
<dbReference type="PaxDb" id="6239-C08B11.6"/>
<dbReference type="PeptideAtlas" id="Q09443"/>
<dbReference type="EnsemblMetazoa" id="C08B11.6.1">
    <property type="protein sequence ID" value="C08B11.6.1"/>
    <property type="gene ID" value="WBGene00007434"/>
</dbReference>
<dbReference type="GeneID" id="174288"/>
<dbReference type="KEGG" id="cel:CELE_C08B11.6"/>
<dbReference type="UCSC" id="C08B11.6.1">
    <property type="organism name" value="c. elegans"/>
</dbReference>
<dbReference type="AGR" id="WB:WBGene00007434"/>
<dbReference type="CTD" id="174288"/>
<dbReference type="WormBase" id="C08B11.6">
    <property type="protein sequence ID" value="CE30856"/>
    <property type="gene ID" value="WBGene00007434"/>
    <property type="gene designation" value="arp-6"/>
</dbReference>
<dbReference type="eggNOG" id="KOG0680">
    <property type="taxonomic scope" value="Eukaryota"/>
</dbReference>
<dbReference type="GeneTree" id="ENSGT00720000108833"/>
<dbReference type="HOGENOM" id="CLU_027965_1_1_1"/>
<dbReference type="InParanoid" id="Q09443"/>
<dbReference type="OMA" id="FFEEYEC"/>
<dbReference type="OrthoDB" id="6220758at2759"/>
<dbReference type="PhylomeDB" id="Q09443"/>
<dbReference type="PRO" id="PR:Q09443"/>
<dbReference type="Proteomes" id="UP000001940">
    <property type="component" value="Chromosome II"/>
</dbReference>
<dbReference type="Bgee" id="WBGene00007434">
    <property type="expression patterns" value="Expressed in germ line (C elegans) and 4 other cell types or tissues"/>
</dbReference>
<dbReference type="GO" id="GO:0005737">
    <property type="term" value="C:cytoplasm"/>
    <property type="evidence" value="ECO:0007669"/>
    <property type="project" value="UniProtKB-KW"/>
</dbReference>
<dbReference type="GO" id="GO:0005856">
    <property type="term" value="C:cytoskeleton"/>
    <property type="evidence" value="ECO:0007669"/>
    <property type="project" value="UniProtKB-SubCell"/>
</dbReference>
<dbReference type="GO" id="GO:0000812">
    <property type="term" value="C:Swr1 complex"/>
    <property type="evidence" value="ECO:0000318"/>
    <property type="project" value="GO_Central"/>
</dbReference>
<dbReference type="GO" id="GO:0031491">
    <property type="term" value="F:nucleosome binding"/>
    <property type="evidence" value="ECO:0000318"/>
    <property type="project" value="GO_Central"/>
</dbReference>
<dbReference type="CDD" id="cd10210">
    <property type="entry name" value="ASKHA_NBD_Arp6"/>
    <property type="match status" value="1"/>
</dbReference>
<dbReference type="FunFam" id="3.90.640.10:FF:000014">
    <property type="entry name" value="Putative actin-related protein 6"/>
    <property type="match status" value="1"/>
</dbReference>
<dbReference type="Gene3D" id="3.30.420.40">
    <property type="match status" value="2"/>
</dbReference>
<dbReference type="Gene3D" id="3.90.640.10">
    <property type="entry name" value="Actin, Chain A, domain 4"/>
    <property type="match status" value="1"/>
</dbReference>
<dbReference type="InterPro" id="IPR004000">
    <property type="entry name" value="Actin"/>
</dbReference>
<dbReference type="InterPro" id="IPR043129">
    <property type="entry name" value="ATPase_NBD"/>
</dbReference>
<dbReference type="PANTHER" id="PTHR11937">
    <property type="entry name" value="ACTIN"/>
    <property type="match status" value="1"/>
</dbReference>
<dbReference type="Pfam" id="PF00022">
    <property type="entry name" value="Actin"/>
    <property type="match status" value="1"/>
</dbReference>
<dbReference type="SMART" id="SM00268">
    <property type="entry name" value="ACTIN"/>
    <property type="match status" value="1"/>
</dbReference>
<dbReference type="SUPFAM" id="SSF53067">
    <property type="entry name" value="Actin-like ATPase domain"/>
    <property type="match status" value="2"/>
</dbReference>
<proteinExistence type="evidence at transcript level"/>
<sequence length="418" mass="47618">MSLTTIIFDNGGHNMKIGTIDSESPRLVPNSIVKAKHEKKRVFVAHEQEECSDKFSLFYVRPIERGYVVNWDTQQQIWEKTFGSMDVEASTSRIALTDNNYLIPALPDVSSEILFDYFGFTEVHKTSASTLVAKHSNKINNEKCAVVVDSGFSWTTVASFVNGMLIQDSVIRIDVGGKALTNKLKDWVSYRQLNVSEETYVINECKEDLCFVSQNFDESMKEARNRFQENTTMKRYIMPDFHSTFRGVVKDVKEPHDPQIPSIHLGVERFAIPEILFNPSDIDIDQCGVAEAVIESICQCPEALRPALAENIIVIGGSSCFPGFRERLEREVRSMLPAEYGLNVSNDVINPQTHSWHCGQELLTASKVPWINRKDWDERGDSLEFSNFFQTLVQSDELKGTRNFDDQREKSPKEDEDF</sequence>
<organism>
    <name type="scientific">Caenorhabditis elegans</name>
    <dbReference type="NCBI Taxonomy" id="6239"/>
    <lineage>
        <taxon>Eukaryota</taxon>
        <taxon>Metazoa</taxon>
        <taxon>Ecdysozoa</taxon>
        <taxon>Nematoda</taxon>
        <taxon>Chromadorea</taxon>
        <taxon>Rhabditida</taxon>
        <taxon>Rhabditina</taxon>
        <taxon>Rhabditomorpha</taxon>
        <taxon>Rhabditoidea</taxon>
        <taxon>Rhabditidae</taxon>
        <taxon>Peloderinae</taxon>
        <taxon>Caenorhabditis</taxon>
    </lineage>
</organism>
<protein>
    <recommendedName>
        <fullName>Actin-like protein C08B11.6</fullName>
    </recommendedName>
</protein>
<reference key="1">
    <citation type="journal article" date="1997" name="J. Biochem.">
        <title>Polycistronic expression and RNA-binding specificity of the C. elegans homologue of the spliceosome-associated protein SAP49.</title>
        <authorList>
            <person name="Tanaka Y."/>
            <person name="Ohta A."/>
            <person name="Terashima K."/>
            <person name="Sakamoto H."/>
        </authorList>
    </citation>
    <scope>NUCLEOTIDE SEQUENCE [MRNA]</scope>
    <scope>DEVELOPMENTAL STAGE</scope>
    <source>
        <strain>Bristol N2</strain>
    </source>
</reference>
<reference key="2">
    <citation type="journal article" date="1998" name="Science">
        <title>Genome sequence of the nematode C. elegans: a platform for investigating biology.</title>
        <authorList>
            <consortium name="The C. elegans sequencing consortium"/>
        </authorList>
    </citation>
    <scope>NUCLEOTIDE SEQUENCE [LARGE SCALE GENOMIC DNA]</scope>
    <source>
        <strain>Bristol N2</strain>
    </source>
</reference>